<reference key="1">
    <citation type="journal article" date="2005" name="PLoS Biol.">
        <title>The genomes of Oryza sativa: a history of duplications.</title>
        <authorList>
            <person name="Yu J."/>
            <person name="Wang J."/>
            <person name="Lin W."/>
            <person name="Li S."/>
            <person name="Li H."/>
            <person name="Zhou J."/>
            <person name="Ni P."/>
            <person name="Dong W."/>
            <person name="Hu S."/>
            <person name="Zeng C."/>
            <person name="Zhang J."/>
            <person name="Zhang Y."/>
            <person name="Li R."/>
            <person name="Xu Z."/>
            <person name="Li S."/>
            <person name="Li X."/>
            <person name="Zheng H."/>
            <person name="Cong L."/>
            <person name="Lin L."/>
            <person name="Yin J."/>
            <person name="Geng J."/>
            <person name="Li G."/>
            <person name="Shi J."/>
            <person name="Liu J."/>
            <person name="Lv H."/>
            <person name="Li J."/>
            <person name="Wang J."/>
            <person name="Deng Y."/>
            <person name="Ran L."/>
            <person name="Shi X."/>
            <person name="Wang X."/>
            <person name="Wu Q."/>
            <person name="Li C."/>
            <person name="Ren X."/>
            <person name="Wang J."/>
            <person name="Wang X."/>
            <person name="Li D."/>
            <person name="Liu D."/>
            <person name="Zhang X."/>
            <person name="Ji Z."/>
            <person name="Zhao W."/>
            <person name="Sun Y."/>
            <person name="Zhang Z."/>
            <person name="Bao J."/>
            <person name="Han Y."/>
            <person name="Dong L."/>
            <person name="Ji J."/>
            <person name="Chen P."/>
            <person name="Wu S."/>
            <person name="Liu J."/>
            <person name="Xiao Y."/>
            <person name="Bu D."/>
            <person name="Tan J."/>
            <person name="Yang L."/>
            <person name="Ye C."/>
            <person name="Zhang J."/>
            <person name="Xu J."/>
            <person name="Zhou Y."/>
            <person name="Yu Y."/>
            <person name="Zhang B."/>
            <person name="Zhuang S."/>
            <person name="Wei H."/>
            <person name="Liu B."/>
            <person name="Lei M."/>
            <person name="Yu H."/>
            <person name="Li Y."/>
            <person name="Xu H."/>
            <person name="Wei S."/>
            <person name="He X."/>
            <person name="Fang L."/>
            <person name="Zhang Z."/>
            <person name="Zhang Y."/>
            <person name="Huang X."/>
            <person name="Su Z."/>
            <person name="Tong W."/>
            <person name="Li J."/>
            <person name="Tong Z."/>
            <person name="Li S."/>
            <person name="Ye J."/>
            <person name="Wang L."/>
            <person name="Fang L."/>
            <person name="Lei T."/>
            <person name="Chen C.-S."/>
            <person name="Chen H.-C."/>
            <person name="Xu Z."/>
            <person name="Li H."/>
            <person name="Huang H."/>
            <person name="Zhang F."/>
            <person name="Xu H."/>
            <person name="Li N."/>
            <person name="Zhao C."/>
            <person name="Li S."/>
            <person name="Dong L."/>
            <person name="Huang Y."/>
            <person name="Li L."/>
            <person name="Xi Y."/>
            <person name="Qi Q."/>
            <person name="Li W."/>
            <person name="Zhang B."/>
            <person name="Hu W."/>
            <person name="Zhang Y."/>
            <person name="Tian X."/>
            <person name="Jiao Y."/>
            <person name="Liang X."/>
            <person name="Jin J."/>
            <person name="Gao L."/>
            <person name="Zheng W."/>
            <person name="Hao B."/>
            <person name="Liu S.-M."/>
            <person name="Wang W."/>
            <person name="Yuan L."/>
            <person name="Cao M."/>
            <person name="McDermott J."/>
            <person name="Samudrala R."/>
            <person name="Wang J."/>
            <person name="Wong G.K.-S."/>
            <person name="Yang H."/>
        </authorList>
    </citation>
    <scope>NUCLEOTIDE SEQUENCE [LARGE SCALE GENOMIC DNA]</scope>
    <source>
        <strain>cv. 93-11</strain>
    </source>
</reference>
<feature type="chain" id="PRO_0000287217" description="Ubiquitin-like protein ATG12">
    <location>
        <begin position="1"/>
        <end position="93"/>
    </location>
</feature>
<feature type="cross-link" description="Glycyl lysine isopeptide (Gly-Lys) (interchain with K-138 in ATG5)" evidence="1">
    <location>
        <position position="93"/>
    </location>
</feature>
<proteinExistence type="inferred from homology"/>
<evidence type="ECO:0000250" key="1"/>
<evidence type="ECO:0000305" key="2"/>
<accession>A2YAG8</accession>
<name>ATG12_ORYSI</name>
<sequence>MAAVAAEQKKVVVHFRSTGNAPQLKQSKFKIGGNEKFLKIIDFLRRQIHQDTVFLYVNSAFSPNPDELIIDLYNNFGIDGQLVVNYASSMAWG</sequence>
<gene>
    <name type="primary">ATG12</name>
    <name type="synonym">APG12</name>
    <name type="ORF">OsI_021311</name>
</gene>
<protein>
    <recommendedName>
        <fullName>Ubiquitin-like protein ATG12</fullName>
    </recommendedName>
    <alternativeName>
        <fullName>Autophagy-related protein 12</fullName>
        <shortName>APG12-like</shortName>
    </alternativeName>
</protein>
<keyword id="KW-0072">Autophagy</keyword>
<keyword id="KW-0963">Cytoplasm</keyword>
<keyword id="KW-1017">Isopeptide bond</keyword>
<keyword id="KW-0653">Protein transport</keyword>
<keyword id="KW-1185">Reference proteome</keyword>
<keyword id="KW-0813">Transport</keyword>
<keyword id="KW-0833">Ubl conjugation pathway</keyword>
<dbReference type="EMBL" id="CM000131">
    <property type="protein sequence ID" value="EAZ00079.1"/>
    <property type="status" value="ALT_SEQ"/>
    <property type="molecule type" value="Genomic_DNA"/>
</dbReference>
<dbReference type="SMR" id="A2YAG8"/>
<dbReference type="STRING" id="39946.A2YAG8"/>
<dbReference type="EnsemblPlants" id="OsZS97_06G007080_02">
    <property type="protein sequence ID" value="OsZS97_06G007080_02"/>
    <property type="gene ID" value="OsZS97_06G007080"/>
</dbReference>
<dbReference type="EnsemblPlants" id="OsZS97_06G007080_03">
    <property type="protein sequence ID" value="OsZS97_06G007080_03"/>
    <property type="gene ID" value="OsZS97_06G007080"/>
</dbReference>
<dbReference type="Gramene" id="OsZS97_06G007080_02">
    <property type="protein sequence ID" value="OsZS97_06G007080_02"/>
    <property type="gene ID" value="OsZS97_06G007080"/>
</dbReference>
<dbReference type="Gramene" id="OsZS97_06G007080_03">
    <property type="protein sequence ID" value="OsZS97_06G007080_03"/>
    <property type="gene ID" value="OsZS97_06G007080"/>
</dbReference>
<dbReference type="HOGENOM" id="CLU_106795_3_1_1"/>
<dbReference type="Proteomes" id="UP000007015">
    <property type="component" value="Chromosome 6"/>
</dbReference>
<dbReference type="GO" id="GO:0034274">
    <property type="term" value="C:Atg12-Atg5-Atg16 complex"/>
    <property type="evidence" value="ECO:0007669"/>
    <property type="project" value="TreeGrafter"/>
</dbReference>
<dbReference type="GO" id="GO:0000421">
    <property type="term" value="C:autophagosome membrane"/>
    <property type="evidence" value="ECO:0007669"/>
    <property type="project" value="TreeGrafter"/>
</dbReference>
<dbReference type="GO" id="GO:0034045">
    <property type="term" value="C:phagophore assembly site membrane"/>
    <property type="evidence" value="ECO:0007669"/>
    <property type="project" value="TreeGrafter"/>
</dbReference>
<dbReference type="GO" id="GO:0019776">
    <property type="term" value="F:Atg8-family ligase activity"/>
    <property type="evidence" value="ECO:0007669"/>
    <property type="project" value="TreeGrafter"/>
</dbReference>
<dbReference type="GO" id="GO:0000045">
    <property type="term" value="P:autophagosome assembly"/>
    <property type="evidence" value="ECO:0007669"/>
    <property type="project" value="InterPro"/>
</dbReference>
<dbReference type="GO" id="GO:0097352">
    <property type="term" value="P:autophagosome maturation"/>
    <property type="evidence" value="ECO:0007669"/>
    <property type="project" value="TreeGrafter"/>
</dbReference>
<dbReference type="GO" id="GO:0000422">
    <property type="term" value="P:autophagy of mitochondrion"/>
    <property type="evidence" value="ECO:0007669"/>
    <property type="project" value="TreeGrafter"/>
</dbReference>
<dbReference type="GO" id="GO:0061723">
    <property type="term" value="P:glycophagy"/>
    <property type="evidence" value="ECO:0007669"/>
    <property type="project" value="TreeGrafter"/>
</dbReference>
<dbReference type="GO" id="GO:0034727">
    <property type="term" value="P:piecemeal microautophagy of the nucleus"/>
    <property type="evidence" value="ECO:0007669"/>
    <property type="project" value="TreeGrafter"/>
</dbReference>
<dbReference type="GO" id="GO:0015031">
    <property type="term" value="P:protein transport"/>
    <property type="evidence" value="ECO:0007669"/>
    <property type="project" value="UniProtKB-KW"/>
</dbReference>
<dbReference type="CDD" id="cd01612">
    <property type="entry name" value="Ubl_ATG12"/>
    <property type="match status" value="1"/>
</dbReference>
<dbReference type="FunFam" id="3.10.20.90:FF:000150">
    <property type="entry name" value="Ubiquitin-like protein ATG12"/>
    <property type="match status" value="1"/>
</dbReference>
<dbReference type="Gene3D" id="3.10.20.90">
    <property type="entry name" value="Phosphatidylinositol 3-kinase Catalytic Subunit, Chain A, domain 1"/>
    <property type="match status" value="1"/>
</dbReference>
<dbReference type="InterPro" id="IPR007242">
    <property type="entry name" value="Atg12"/>
</dbReference>
<dbReference type="InterPro" id="IPR029071">
    <property type="entry name" value="Ubiquitin-like_domsf"/>
</dbReference>
<dbReference type="PANTHER" id="PTHR13385">
    <property type="entry name" value="AUTOPHAGY PROTEIN 12"/>
    <property type="match status" value="1"/>
</dbReference>
<dbReference type="PANTHER" id="PTHR13385:SF3">
    <property type="entry name" value="UBIQUITIN-LIKE PROTEIN ATG12"/>
    <property type="match status" value="1"/>
</dbReference>
<dbReference type="Pfam" id="PF04110">
    <property type="entry name" value="APG12"/>
    <property type="match status" value="1"/>
</dbReference>
<dbReference type="SUPFAM" id="SSF54236">
    <property type="entry name" value="Ubiquitin-like"/>
    <property type="match status" value="1"/>
</dbReference>
<comment type="function">
    <text evidence="1">Ubiquitin-like protein involved in cytoplasm to vacuole transport (Cvt) and autophagy vesicles formation. Conjugation with ATG5 through a ubiquitin-like conjugating system is essential for its function. ATG12/ATG5 conjugate has an essential role in plant nutrient recycling (By similarity).</text>
</comment>
<comment type="subcellular location">
    <subcellularLocation>
        <location evidence="1">Cytoplasm</location>
    </subcellularLocation>
</comment>
<comment type="similarity">
    <text evidence="2">Belongs to the ATG12 family.</text>
</comment>
<comment type="sequence caution" evidence="2">
    <conflict type="erroneous gene model prediction">
        <sequence resource="EMBL-CDS" id="EAZ00079"/>
    </conflict>
</comment>
<comment type="sequence caution" evidence="2">
    <conflict type="frameshift">
        <sequence resource="EMBL-CDS" id="EAZ00079"/>
    </conflict>
</comment>
<organism>
    <name type="scientific">Oryza sativa subsp. indica</name>
    <name type="common">Rice</name>
    <dbReference type="NCBI Taxonomy" id="39946"/>
    <lineage>
        <taxon>Eukaryota</taxon>
        <taxon>Viridiplantae</taxon>
        <taxon>Streptophyta</taxon>
        <taxon>Embryophyta</taxon>
        <taxon>Tracheophyta</taxon>
        <taxon>Spermatophyta</taxon>
        <taxon>Magnoliopsida</taxon>
        <taxon>Liliopsida</taxon>
        <taxon>Poales</taxon>
        <taxon>Poaceae</taxon>
        <taxon>BOP clade</taxon>
        <taxon>Oryzoideae</taxon>
        <taxon>Oryzeae</taxon>
        <taxon>Oryzinae</taxon>
        <taxon>Oryza</taxon>
        <taxon>Oryza sativa</taxon>
    </lineage>
</organism>